<dbReference type="EMBL" id="CR861375">
    <property type="protein sequence ID" value="CAH93434.1"/>
    <property type="molecule type" value="mRNA"/>
</dbReference>
<dbReference type="RefSeq" id="NP_001127011.1">
    <property type="nucleotide sequence ID" value="NM_001133539.1"/>
</dbReference>
<dbReference type="SMR" id="Q5R482"/>
<dbReference type="FunCoup" id="Q5R482">
    <property type="interactions" value="89"/>
</dbReference>
<dbReference type="STRING" id="9601.ENSPPYP00000020082"/>
<dbReference type="GlyCosmos" id="Q5R482">
    <property type="glycosylation" value="8 sites, No reported glycans"/>
</dbReference>
<dbReference type="GeneID" id="100174035"/>
<dbReference type="KEGG" id="pon:100174035"/>
<dbReference type="CTD" id="54674"/>
<dbReference type="eggNOG" id="KOG0619">
    <property type="taxonomic scope" value="Eukaryota"/>
</dbReference>
<dbReference type="InParanoid" id="Q5R482"/>
<dbReference type="OrthoDB" id="676979at2759"/>
<dbReference type="Proteomes" id="UP000001595">
    <property type="component" value="Unplaced"/>
</dbReference>
<dbReference type="GO" id="GO:0016020">
    <property type="term" value="C:membrane"/>
    <property type="evidence" value="ECO:0007669"/>
    <property type="project" value="UniProtKB-SubCell"/>
</dbReference>
<dbReference type="CDD" id="cd00063">
    <property type="entry name" value="FN3"/>
    <property type="match status" value="1"/>
</dbReference>
<dbReference type="FunFam" id="2.60.40.10:FF:000355">
    <property type="entry name" value="Leucine-rich repeat neuronal protein 1"/>
    <property type="match status" value="1"/>
</dbReference>
<dbReference type="FunFam" id="2.60.40.10:FF:000481">
    <property type="entry name" value="Leucine-rich repeat neuronal protein 1"/>
    <property type="match status" value="1"/>
</dbReference>
<dbReference type="FunFam" id="3.80.10.10:FF:000056">
    <property type="entry name" value="Leucine-rich repeat neuronal protein 1"/>
    <property type="match status" value="1"/>
</dbReference>
<dbReference type="FunFam" id="3.80.10.10:FF:000074">
    <property type="entry name" value="Leucine-rich repeat neuronal protein 1"/>
    <property type="match status" value="1"/>
</dbReference>
<dbReference type="FunFam" id="3.80.10.10:FF:000090">
    <property type="entry name" value="Leucine-rich repeat neuronal protein 1"/>
    <property type="match status" value="1"/>
</dbReference>
<dbReference type="Gene3D" id="2.60.40.10">
    <property type="entry name" value="Immunoglobulins"/>
    <property type="match status" value="2"/>
</dbReference>
<dbReference type="Gene3D" id="3.80.10.10">
    <property type="entry name" value="Ribonuclease Inhibitor"/>
    <property type="match status" value="3"/>
</dbReference>
<dbReference type="InterPro" id="IPR000483">
    <property type="entry name" value="Cys-rich_flank_reg_C"/>
</dbReference>
<dbReference type="InterPro" id="IPR003961">
    <property type="entry name" value="FN3_dom"/>
</dbReference>
<dbReference type="InterPro" id="IPR036116">
    <property type="entry name" value="FN3_sf"/>
</dbReference>
<dbReference type="InterPro" id="IPR007110">
    <property type="entry name" value="Ig-like_dom"/>
</dbReference>
<dbReference type="InterPro" id="IPR036179">
    <property type="entry name" value="Ig-like_dom_sf"/>
</dbReference>
<dbReference type="InterPro" id="IPR013783">
    <property type="entry name" value="Ig-like_fold"/>
</dbReference>
<dbReference type="InterPro" id="IPR013098">
    <property type="entry name" value="Ig_I-set"/>
</dbReference>
<dbReference type="InterPro" id="IPR003599">
    <property type="entry name" value="Ig_sub"/>
</dbReference>
<dbReference type="InterPro" id="IPR003598">
    <property type="entry name" value="Ig_sub2"/>
</dbReference>
<dbReference type="InterPro" id="IPR001611">
    <property type="entry name" value="Leu-rich_rpt"/>
</dbReference>
<dbReference type="InterPro" id="IPR003591">
    <property type="entry name" value="Leu-rich_rpt_typical-subtyp"/>
</dbReference>
<dbReference type="InterPro" id="IPR032675">
    <property type="entry name" value="LRR_dom_sf"/>
</dbReference>
<dbReference type="InterPro" id="IPR000372">
    <property type="entry name" value="LRRNT"/>
</dbReference>
<dbReference type="PANTHER" id="PTHR24366">
    <property type="entry name" value="IG(IMMUNOGLOBULIN) AND LRR(LEUCINE RICH REPEAT) DOMAINS"/>
    <property type="match status" value="1"/>
</dbReference>
<dbReference type="PANTHER" id="PTHR24366:SF73">
    <property type="entry name" value="LEUCINE-RICH REPEAT NEURONAL 3A"/>
    <property type="match status" value="1"/>
</dbReference>
<dbReference type="Pfam" id="PF00041">
    <property type="entry name" value="fn3"/>
    <property type="match status" value="1"/>
</dbReference>
<dbReference type="Pfam" id="PF07679">
    <property type="entry name" value="I-set"/>
    <property type="match status" value="1"/>
</dbReference>
<dbReference type="Pfam" id="PF13855">
    <property type="entry name" value="LRR_8"/>
    <property type="match status" value="3"/>
</dbReference>
<dbReference type="SMART" id="SM00409">
    <property type="entry name" value="IG"/>
    <property type="match status" value="1"/>
</dbReference>
<dbReference type="SMART" id="SM00408">
    <property type="entry name" value="IGc2"/>
    <property type="match status" value="1"/>
</dbReference>
<dbReference type="SMART" id="SM00365">
    <property type="entry name" value="LRR_SD22"/>
    <property type="match status" value="4"/>
</dbReference>
<dbReference type="SMART" id="SM00369">
    <property type="entry name" value="LRR_TYP"/>
    <property type="match status" value="8"/>
</dbReference>
<dbReference type="SMART" id="SM00082">
    <property type="entry name" value="LRRCT"/>
    <property type="match status" value="1"/>
</dbReference>
<dbReference type="SMART" id="SM00013">
    <property type="entry name" value="LRRNT"/>
    <property type="match status" value="1"/>
</dbReference>
<dbReference type="SUPFAM" id="SSF49265">
    <property type="entry name" value="Fibronectin type III"/>
    <property type="match status" value="1"/>
</dbReference>
<dbReference type="SUPFAM" id="SSF48726">
    <property type="entry name" value="Immunoglobulin"/>
    <property type="match status" value="1"/>
</dbReference>
<dbReference type="SUPFAM" id="SSF52058">
    <property type="entry name" value="L domain-like"/>
    <property type="match status" value="1"/>
</dbReference>
<dbReference type="PROSITE" id="PS50853">
    <property type="entry name" value="FN3"/>
    <property type="match status" value="1"/>
</dbReference>
<dbReference type="PROSITE" id="PS50835">
    <property type="entry name" value="IG_LIKE"/>
    <property type="match status" value="1"/>
</dbReference>
<dbReference type="PROSITE" id="PS51450">
    <property type="entry name" value="LRR"/>
    <property type="match status" value="10"/>
</dbReference>
<comment type="subcellular location">
    <subcellularLocation>
        <location evidence="4">Membrane</location>
        <topology evidence="4">Single-pass type I membrane protein</topology>
    </subcellularLocation>
</comment>
<feature type="signal peptide" evidence="1">
    <location>
        <begin position="1"/>
        <end position="22"/>
    </location>
</feature>
<feature type="chain" id="PRO_0000045826" description="Leucine-rich repeat neuronal protein 3">
    <location>
        <begin position="23"/>
        <end position="708"/>
    </location>
</feature>
<feature type="topological domain" description="Extracellular" evidence="1">
    <location>
        <begin position="23"/>
        <end position="628"/>
    </location>
</feature>
<feature type="transmembrane region" description="Helical" evidence="1">
    <location>
        <begin position="629"/>
        <end position="649"/>
    </location>
</feature>
<feature type="topological domain" description="Cytoplasmic" evidence="1">
    <location>
        <begin position="650"/>
        <end position="708"/>
    </location>
</feature>
<feature type="domain" description="LRRNT">
    <location>
        <begin position="23"/>
        <end position="69"/>
    </location>
</feature>
<feature type="repeat" description="LRR 1">
    <location>
        <begin position="70"/>
        <end position="91"/>
    </location>
</feature>
<feature type="repeat" description="LRR 2">
    <location>
        <begin position="93"/>
        <end position="114"/>
    </location>
</feature>
<feature type="repeat" description="LRR 3">
    <location>
        <begin position="117"/>
        <end position="138"/>
    </location>
</feature>
<feature type="repeat" description="LRR 4">
    <location>
        <begin position="141"/>
        <end position="162"/>
    </location>
</feature>
<feature type="repeat" description="LRR 5">
    <location>
        <begin position="165"/>
        <end position="186"/>
    </location>
</feature>
<feature type="repeat" description="LRR 6">
    <location>
        <begin position="189"/>
        <end position="210"/>
    </location>
</feature>
<feature type="repeat" description="LRR 7">
    <location>
        <begin position="213"/>
        <end position="234"/>
    </location>
</feature>
<feature type="repeat" description="LRR 8">
    <location>
        <begin position="237"/>
        <end position="258"/>
    </location>
</feature>
<feature type="repeat" description="LRR 9">
    <location>
        <begin position="261"/>
        <end position="282"/>
    </location>
</feature>
<feature type="repeat" description="LRR 10">
    <location>
        <begin position="285"/>
        <end position="304"/>
    </location>
</feature>
<feature type="repeat" description="LRR 11">
    <location>
        <begin position="310"/>
        <end position="332"/>
    </location>
</feature>
<feature type="repeat" description="LRR 12">
    <location>
        <begin position="335"/>
        <end position="358"/>
    </location>
</feature>
<feature type="domain" description="LRRCT">
    <location>
        <begin position="368"/>
        <end position="421"/>
    </location>
</feature>
<feature type="domain" description="Ig-like C2-type">
    <location>
        <begin position="421"/>
        <end position="514"/>
    </location>
</feature>
<feature type="domain" description="Fibronectin type-III" evidence="3">
    <location>
        <begin position="523"/>
        <end position="617"/>
    </location>
</feature>
<feature type="glycosylation site" description="N-linked (GlcNAc...) asparagine" evidence="1">
    <location>
        <position position="93"/>
    </location>
</feature>
<feature type="glycosylation site" description="N-linked (GlcNAc...) asparagine" evidence="1">
    <location>
        <position position="103"/>
    </location>
</feature>
<feature type="glycosylation site" description="N-linked (GlcNAc...) asparagine" evidence="1">
    <location>
        <position position="223"/>
    </location>
</feature>
<feature type="glycosylation site" description="N-linked (GlcNAc...) asparagine" evidence="1">
    <location>
        <position position="382"/>
    </location>
</feature>
<feature type="glycosylation site" description="N-linked (GlcNAc...) asparagine" evidence="1">
    <location>
        <position position="522"/>
    </location>
</feature>
<feature type="glycosylation site" description="N-linked (GlcNAc...) asparagine" evidence="1">
    <location>
        <position position="579"/>
    </location>
</feature>
<feature type="glycosylation site" description="N-linked (GlcNAc...) asparagine" evidence="1">
    <location>
        <position position="608"/>
    </location>
</feature>
<feature type="glycosylation site" description="N-linked (GlcNAc...) asparagine" evidence="1">
    <location>
        <position position="625"/>
    </location>
</feature>
<feature type="disulfide bond" evidence="2">
    <location>
        <begin position="444"/>
        <end position="496"/>
    </location>
</feature>
<name>LRRN3_PONAB</name>
<keyword id="KW-1015">Disulfide bond</keyword>
<keyword id="KW-0325">Glycoprotein</keyword>
<keyword id="KW-0393">Immunoglobulin domain</keyword>
<keyword id="KW-0433">Leucine-rich repeat</keyword>
<keyword id="KW-0472">Membrane</keyword>
<keyword id="KW-1185">Reference proteome</keyword>
<keyword id="KW-0677">Repeat</keyword>
<keyword id="KW-0732">Signal</keyword>
<keyword id="KW-0812">Transmembrane</keyword>
<keyword id="KW-1133">Transmembrane helix</keyword>
<accession>Q5R482</accession>
<proteinExistence type="evidence at transcript level"/>
<gene>
    <name type="primary">LRRN3</name>
</gene>
<reference key="1">
    <citation type="submission" date="2004-11" db="EMBL/GenBank/DDBJ databases">
        <authorList>
            <consortium name="The German cDNA consortium"/>
        </authorList>
    </citation>
    <scope>NUCLEOTIDE SEQUENCE [LARGE SCALE MRNA]</scope>
    <source>
        <tissue>Brain cortex</tissue>
    </source>
</reference>
<evidence type="ECO:0000255" key="1"/>
<evidence type="ECO:0000255" key="2">
    <source>
        <dbReference type="PROSITE-ProRule" id="PRU00114"/>
    </source>
</evidence>
<evidence type="ECO:0000255" key="3">
    <source>
        <dbReference type="PROSITE-ProRule" id="PRU00316"/>
    </source>
</evidence>
<evidence type="ECO:0000305" key="4"/>
<protein>
    <recommendedName>
        <fullName>Leucine-rich repeat neuronal protein 3</fullName>
    </recommendedName>
    <alternativeName>
        <fullName>Neuronal leucine-rich repeat protein 3</fullName>
        <shortName>NLRR-3</shortName>
    </alternativeName>
</protein>
<organism>
    <name type="scientific">Pongo abelii</name>
    <name type="common">Sumatran orangutan</name>
    <name type="synonym">Pongo pygmaeus abelii</name>
    <dbReference type="NCBI Taxonomy" id="9601"/>
    <lineage>
        <taxon>Eukaryota</taxon>
        <taxon>Metazoa</taxon>
        <taxon>Chordata</taxon>
        <taxon>Craniata</taxon>
        <taxon>Vertebrata</taxon>
        <taxon>Euteleostomi</taxon>
        <taxon>Mammalia</taxon>
        <taxon>Eutheria</taxon>
        <taxon>Euarchontoglires</taxon>
        <taxon>Primates</taxon>
        <taxon>Haplorrhini</taxon>
        <taxon>Catarrhini</taxon>
        <taxon>Hominidae</taxon>
        <taxon>Pongo</taxon>
    </lineage>
</organism>
<sequence>MKDMPLQIHVLLGLAITTLVQAVDKKVDCPQLCTCEIRPWFTPTSIYMEASTVDCNDLGLLTFPARLPANTQILLLQTNDIAKIEYSTDFPVNLTGLDLSQNNLSSVTNINVKKMPQLLSVYLEENKLTELPEKCLSELSNLQELYINHNLLSTISPGAFIGLHNLLRLHLNSNRLQMINSKWFDALPNLEILMIGENPIIRIKDMNFKPLINLRSLVIAGINLTEIPDNALVGLENLESISFYDNRLIKVPHAALQKVVNLKFLDLNKNPINRIRRGDFSNMLHLKELGINNMPELISIDSLAVDNLPDLRKIEATNNPRLSYIHPNAFFRLPKLESLMLNSNALSALYHGTIESLPNLKEISIHSNPIRCDCVIRWINMNKTNIRFMEPDSLFCVDPPEFQGQNVRQVHFRDMMEICLPLIAPESFPSNLNVEAGSYVSFHCRATAEPQPEIYWITPSGQKLLPNTLTDKFYVHSEGTLDINGVTPKEGGLYTCIATNLVGADLKSVMIKVDGSFPQDNNGSLNIKIRDIQANSVLVSWKASSKILKSSVKWTAFVKTENSHAAQSARIPSDIKVYNLTHLNPSTEYKICIDIPTIYQKNRKKCVNVTTKGLDPDQKEYEKSNTTTLMACLGGLLGIIGVICLISCLSPEMNCDGGHSYVRNYLQKPTFALGELYPPLINLWEAGKEKSTSLKVKATVIGLPTNMS</sequence>